<protein>
    <recommendedName>
        <fullName>Katanin-interacting protein</fullName>
    </recommendedName>
</protein>
<proteinExistence type="evidence at protein level"/>
<organism>
    <name type="scientific">Homo sapiens</name>
    <name type="common">Human</name>
    <dbReference type="NCBI Taxonomy" id="9606"/>
    <lineage>
        <taxon>Eukaryota</taxon>
        <taxon>Metazoa</taxon>
        <taxon>Chordata</taxon>
        <taxon>Craniata</taxon>
        <taxon>Vertebrata</taxon>
        <taxon>Euteleostomi</taxon>
        <taxon>Mammalia</taxon>
        <taxon>Eutheria</taxon>
        <taxon>Euarchontoglires</taxon>
        <taxon>Primates</taxon>
        <taxon>Haplorrhini</taxon>
        <taxon>Catarrhini</taxon>
        <taxon>Hominidae</taxon>
        <taxon>Homo</taxon>
    </lineage>
</organism>
<accession>O60303</accession>
<accession>A7E2C2</accession>
<sequence length="1618" mass="180918">MDGQTLRKAERSWSCSREKKEGYAKDMVTDFDEKHDEYLILLQQRNRILKHLKSKDPVQLRLEHLEQGFSVYVNGANSELKSSPRKAIHSDFSRSASHTEGTHDYGRRTLFREAEEALRRSSRTAPSKVQRRGWHQKSVQIRTEAGPRLHIEPPVDYSDDFELCGDVTLQANNTSEDRPQELRRSLELSVNLQRKQKDCSSDEYDSIEEDILSEPEPEDPALVGHPRHDRPPSSGDWTQKDVHGEQETEGRSSPGPDTLVVLEFNPASKSHKRERNLSAKRKDNAEVFVPTKPEPNLTPQAPAVFPDQERMCSRPGSRRERPLSATRKTLCEAEYPEEDASAVLQAIQVENAALQRALLSRKAEQPASPLQDAEGPPAKPWTSLLEEKEETLELLPITTATTTQEPAGAAGGARAINQAMDRIGLLGSRQQQKLLKVLQAVESDSAHLGRVVSPTKEQVSDTEDKQRMRADEIKDAIYVTMEILSNWGNSWWVGLTEVEFFDLNDTKLYVSPHDVDIRNTATPGELGRLVNRNLAGKKDSSPWTCPFHPPLQLFFVIRNTRQLGDFHLAKIKVRNYWTADGDLDIGAKNVKLYVNRNLIFNGKLDKGDREAPADHSILVDQKNEKSEQLEEAMNAHSEESKGTHEMAGASGDKELGLGCSPPAETLADAKLSSQGNVSGKRKNSTNCRKDSLSQLEEYLRLSAVPTSMGDMPSAPATSPPVKCPPVHEEPSLIQQLENLMGRKICEPPGKTPSWLQPSPTGKDRKQGGRKPKPLWLSPEKPLAWKGRLPSDDVIGEGPGETEARDKGLRHEPGWGTSRSVNTKERPQRATTKVHSDDSDIFNQPPNRERPASGRRGSRKDAGSSSHGDDQPASREDTWSSRTPSRSRWRSEQEHTLHESWSSLSAFDRSHRGRISNTELPGDILDELLQQKSSRHSDLPPSKKGEQPGLSRGQDGYSGETDAGGDFKIPVLPYGQRLVIDIKSTWGDRHYVGLNGIEIFSSKGEPVQISNIKADPPDINILPAYGKDPRVVTNLIDGVNRTQDDMHVWLAPFTRGRSHSITIDFTHPCHVALIRIWNYNKSRIHSFRGVKDITMLLDTQCIFEGEIAKASGTLAGAPEHFGDTILFTTDDDILEAIFYSDEMFDLDVGSLDSLQDEEAMRRPSTADGEGDERPFTQAGLGADERIPELELPSSSPVPQVTTPEPGIYHGICLQLNFTASWGDLHYLGLTGLEVVGKEGQALPIHLHQISASPRDLNELPEYSDDSRALDKLIDGTNITMEDEHMWLIPFSPGLDHVVTIRLDRAESIAGLRFWNYNKSPEDTYRGAKIVHVSLDGLCVSPPEGFLIRKGPGNCHFDFAQEILFVDYLRAQLLPQPARRLDMRSLECASMDYEAPLMPCGFIFQFQLLTSWGDPYYIGLTGLELYDERGEKIPLSENNIAAFPDSVNSLEGVGGDVRTPDKLIDQVNDTSDGRHMWLAPILPGLVNRVYVIFDLPTTVSMIKLWNYAKTPHRGVKEFGLLVDDLLVYNGILAMVSHLVGGILPTCEPTVPYHTILFTEDRDIRHQEKHTTISNQAEDQDVQMMNENQIITNAKRKQSVVDPALRPKTCISEKETRRRRC</sequence>
<gene>
    <name evidence="8" type="primary">KATNIP</name>
    <name type="synonym">KIAA0556</name>
</gene>
<feature type="chain" id="PRO_0000313090" description="Katanin-interacting protein">
    <location>
        <begin position="1"/>
        <end position="1618"/>
    </location>
</feature>
<feature type="region of interest" description="Disordered" evidence="2">
    <location>
        <begin position="1"/>
        <end position="21"/>
    </location>
</feature>
<feature type="region of interest" description="Disordered" evidence="2">
    <location>
        <begin position="84"/>
        <end position="106"/>
    </location>
</feature>
<feature type="region of interest" description="Disordered" evidence="2">
    <location>
        <begin position="119"/>
        <end position="138"/>
    </location>
</feature>
<feature type="region of interest" description="Disordered" evidence="2">
    <location>
        <begin position="212"/>
        <end position="260"/>
    </location>
</feature>
<feature type="region of interest" description="Disordered" evidence="2">
    <location>
        <begin position="616"/>
        <end position="691"/>
    </location>
</feature>
<feature type="region of interest" description="Disordered" evidence="2">
    <location>
        <begin position="706"/>
        <end position="727"/>
    </location>
</feature>
<feature type="region of interest" description="Disordered" evidence="2">
    <location>
        <begin position="743"/>
        <end position="899"/>
    </location>
</feature>
<feature type="region of interest" description="Disordered" evidence="2">
    <location>
        <begin position="932"/>
        <end position="963"/>
    </location>
</feature>
<feature type="region of interest" description="Disordered" evidence="2">
    <location>
        <begin position="1154"/>
        <end position="1176"/>
    </location>
</feature>
<feature type="coiled-coil region" evidence="1">
    <location>
        <begin position="613"/>
        <end position="643"/>
    </location>
</feature>
<feature type="compositionally biased region" description="Basic and acidic residues" evidence="2">
    <location>
        <begin position="238"/>
        <end position="250"/>
    </location>
</feature>
<feature type="compositionally biased region" description="Basic and acidic residues" evidence="2">
    <location>
        <begin position="801"/>
        <end position="812"/>
    </location>
</feature>
<feature type="compositionally biased region" description="Basic and acidic residues" evidence="2">
    <location>
        <begin position="821"/>
        <end position="837"/>
    </location>
</feature>
<feature type="compositionally biased region" description="Basic and acidic residues" evidence="2">
    <location>
        <begin position="858"/>
        <end position="878"/>
    </location>
</feature>
<feature type="compositionally biased region" description="Basic and acidic residues" evidence="2">
    <location>
        <begin position="888"/>
        <end position="897"/>
    </location>
</feature>
<feature type="compositionally biased region" description="Basic and acidic residues" evidence="2">
    <location>
        <begin position="934"/>
        <end position="945"/>
    </location>
</feature>
<feature type="modified residue" description="Phosphoserine" evidence="10">
    <location>
        <position position="453"/>
    </location>
</feature>
<feature type="modified residue" description="Phosphoserine" evidence="10">
    <location>
        <position position="660"/>
    </location>
</feature>
<feature type="modified residue" description="Phosphoserine" evidence="9">
    <location>
        <position position="691"/>
    </location>
</feature>
<feature type="sequence variant" id="VAR_037654" description="In dbSNP:rs12930355.">
    <original>T</original>
    <variation>M</variation>
    <location>
        <position position="522"/>
    </location>
</feature>
<feature type="sequence variant" id="VAR_037655" description="In dbSNP:rs11643103.">
    <original>A</original>
    <variation>S</variation>
    <location>
        <position position="535"/>
    </location>
</feature>
<feature type="sequence variant" id="VAR_082145" description="In JBTS26; uncertain significance." evidence="5">
    <location>
        <begin position="558"/>
        <end position="1618"/>
    </location>
</feature>
<feature type="sequence variant" id="VAR_037656" description="In dbSNP:rs16976970.">
    <original>R</original>
    <variation>Q</variation>
    <location>
        <position position="885"/>
    </location>
</feature>
<feature type="sequence variant" id="VAR_061238" description="In dbSNP:rs55953014.">
    <original>A</original>
    <variation>V</variation>
    <location>
        <position position="1240"/>
    </location>
</feature>
<feature type="sequence variant" id="VAR_037657" description="In dbSNP:rs4787984." evidence="3 6">
    <original>A</original>
    <variation>T</variation>
    <location>
        <position position="1267"/>
    </location>
</feature>
<feature type="sequence variant" id="VAR_037658" description="In dbSNP:rs11644502.">
    <original>R</original>
    <variation>Q</variation>
    <location>
        <position position="1368"/>
    </location>
</feature>
<feature type="sequence variant" id="VAR_037659" description="In dbSNP:rs2287790.">
    <original>V</original>
    <variation>I</variation>
    <location>
        <position position="1597"/>
    </location>
</feature>
<evidence type="ECO:0000255" key="1"/>
<evidence type="ECO:0000256" key="2">
    <source>
        <dbReference type="SAM" id="MobiDB-lite"/>
    </source>
</evidence>
<evidence type="ECO:0000269" key="3">
    <source>
    </source>
</evidence>
<evidence type="ECO:0000269" key="4">
    <source>
    </source>
</evidence>
<evidence type="ECO:0000269" key="5">
    <source>
    </source>
</evidence>
<evidence type="ECO:0000269" key="6">
    <source>
    </source>
</evidence>
<evidence type="ECO:0000305" key="7"/>
<evidence type="ECO:0000312" key="8">
    <source>
        <dbReference type="HGNC" id="HGNC:29068"/>
    </source>
</evidence>
<evidence type="ECO:0007744" key="9">
    <source>
    </source>
</evidence>
<evidence type="ECO:0007744" key="10">
    <source>
    </source>
</evidence>
<reference key="1">
    <citation type="journal article" date="1998" name="DNA Res.">
        <title>Prediction of the coding sequences of unidentified human genes. IX. The complete sequences of 100 new cDNA clones from brain which can code for large proteins in vitro.</title>
        <authorList>
            <person name="Nagase T."/>
            <person name="Ishikawa K."/>
            <person name="Miyajima N."/>
            <person name="Tanaka A."/>
            <person name="Kotani H."/>
            <person name="Nomura N."/>
            <person name="Ohara O."/>
        </authorList>
    </citation>
    <scope>NUCLEOTIDE SEQUENCE [LARGE SCALE MRNA]</scope>
    <scope>VARIANT THR-1267</scope>
    <source>
        <tissue>Brain</tissue>
    </source>
</reference>
<reference key="2">
    <citation type="journal article" date="2002" name="DNA Res.">
        <title>Construction of expression-ready cDNA clones for KIAA genes: manual curation of 330 KIAA cDNA clones.</title>
        <authorList>
            <person name="Nakajima D."/>
            <person name="Okazaki N."/>
            <person name="Yamakawa H."/>
            <person name="Kikuno R."/>
            <person name="Ohara O."/>
            <person name="Nagase T."/>
        </authorList>
    </citation>
    <scope>SEQUENCE REVISION</scope>
</reference>
<reference key="3">
    <citation type="journal article" date="2004" name="Nature">
        <title>The sequence and analysis of duplication-rich human chromosome 16.</title>
        <authorList>
            <person name="Martin J."/>
            <person name="Han C."/>
            <person name="Gordon L.A."/>
            <person name="Terry A."/>
            <person name="Prabhakar S."/>
            <person name="She X."/>
            <person name="Xie G."/>
            <person name="Hellsten U."/>
            <person name="Chan Y.M."/>
            <person name="Altherr M."/>
            <person name="Couronne O."/>
            <person name="Aerts A."/>
            <person name="Bajorek E."/>
            <person name="Black S."/>
            <person name="Blumer H."/>
            <person name="Branscomb E."/>
            <person name="Brown N.C."/>
            <person name="Bruno W.J."/>
            <person name="Buckingham J.M."/>
            <person name="Callen D.F."/>
            <person name="Campbell C.S."/>
            <person name="Campbell M.L."/>
            <person name="Campbell E.W."/>
            <person name="Caoile C."/>
            <person name="Challacombe J.F."/>
            <person name="Chasteen L.A."/>
            <person name="Chertkov O."/>
            <person name="Chi H.C."/>
            <person name="Christensen M."/>
            <person name="Clark L.M."/>
            <person name="Cohn J.D."/>
            <person name="Denys M."/>
            <person name="Detter J.C."/>
            <person name="Dickson M."/>
            <person name="Dimitrijevic-Bussod M."/>
            <person name="Escobar J."/>
            <person name="Fawcett J.J."/>
            <person name="Flowers D."/>
            <person name="Fotopulos D."/>
            <person name="Glavina T."/>
            <person name="Gomez M."/>
            <person name="Gonzales E."/>
            <person name="Goodstein D."/>
            <person name="Goodwin L.A."/>
            <person name="Grady D.L."/>
            <person name="Grigoriev I."/>
            <person name="Groza M."/>
            <person name="Hammon N."/>
            <person name="Hawkins T."/>
            <person name="Haydu L."/>
            <person name="Hildebrand C.E."/>
            <person name="Huang W."/>
            <person name="Israni S."/>
            <person name="Jett J."/>
            <person name="Jewett P.B."/>
            <person name="Kadner K."/>
            <person name="Kimball H."/>
            <person name="Kobayashi A."/>
            <person name="Krawczyk M.-C."/>
            <person name="Leyba T."/>
            <person name="Longmire J.L."/>
            <person name="Lopez F."/>
            <person name="Lou Y."/>
            <person name="Lowry S."/>
            <person name="Ludeman T."/>
            <person name="Manohar C.F."/>
            <person name="Mark G.A."/>
            <person name="McMurray K.L."/>
            <person name="Meincke L.J."/>
            <person name="Morgan J."/>
            <person name="Moyzis R.K."/>
            <person name="Mundt M.O."/>
            <person name="Munk A.C."/>
            <person name="Nandkeshwar R.D."/>
            <person name="Pitluck S."/>
            <person name="Pollard M."/>
            <person name="Predki P."/>
            <person name="Parson-Quintana B."/>
            <person name="Ramirez L."/>
            <person name="Rash S."/>
            <person name="Retterer J."/>
            <person name="Ricke D.O."/>
            <person name="Robinson D.L."/>
            <person name="Rodriguez A."/>
            <person name="Salamov A."/>
            <person name="Saunders E.H."/>
            <person name="Scott D."/>
            <person name="Shough T."/>
            <person name="Stallings R.L."/>
            <person name="Stalvey M."/>
            <person name="Sutherland R.D."/>
            <person name="Tapia R."/>
            <person name="Tesmer J.G."/>
            <person name="Thayer N."/>
            <person name="Thompson L.S."/>
            <person name="Tice H."/>
            <person name="Torney D.C."/>
            <person name="Tran-Gyamfi M."/>
            <person name="Tsai M."/>
            <person name="Ulanovsky L.E."/>
            <person name="Ustaszewska A."/>
            <person name="Vo N."/>
            <person name="White P.S."/>
            <person name="Williams A.L."/>
            <person name="Wills P.L."/>
            <person name="Wu J.-R."/>
            <person name="Wu K."/>
            <person name="Yang J."/>
            <person name="DeJong P."/>
            <person name="Bruce D."/>
            <person name="Doggett N.A."/>
            <person name="Deaven L."/>
            <person name="Schmutz J."/>
            <person name="Grimwood J."/>
            <person name="Richardson P."/>
            <person name="Rokhsar D.S."/>
            <person name="Eichler E.E."/>
            <person name="Gilna P."/>
            <person name="Lucas S.M."/>
            <person name="Myers R.M."/>
            <person name="Rubin E.M."/>
            <person name="Pennacchio L.A."/>
        </authorList>
    </citation>
    <scope>NUCLEOTIDE SEQUENCE [LARGE SCALE GENOMIC DNA]</scope>
</reference>
<reference key="4">
    <citation type="journal article" date="2004" name="Genome Res.">
        <title>The status, quality, and expansion of the NIH full-length cDNA project: the Mammalian Gene Collection (MGC).</title>
        <authorList>
            <consortium name="The MGC Project Team"/>
        </authorList>
    </citation>
    <scope>NUCLEOTIDE SEQUENCE [LARGE SCALE MRNA]</scope>
    <scope>VARIANT THR-1267</scope>
</reference>
<reference key="5">
    <citation type="journal article" date="2008" name="Proc. Natl. Acad. Sci. U.S.A.">
        <title>A quantitative atlas of mitotic phosphorylation.</title>
        <authorList>
            <person name="Dephoure N."/>
            <person name="Zhou C."/>
            <person name="Villen J."/>
            <person name="Beausoleil S.A."/>
            <person name="Bakalarski C.E."/>
            <person name="Elledge S.J."/>
            <person name="Gygi S.P."/>
        </authorList>
    </citation>
    <scope>PHOSPHORYLATION [LARGE SCALE ANALYSIS] AT SER-691</scope>
    <scope>IDENTIFICATION BY MASS SPECTROMETRY [LARGE SCALE ANALYSIS]</scope>
    <source>
        <tissue>Cervix carcinoma</tissue>
    </source>
</reference>
<reference key="6">
    <citation type="journal article" date="2013" name="J. Proteome Res.">
        <title>Toward a comprehensive characterization of a human cancer cell phosphoproteome.</title>
        <authorList>
            <person name="Zhou H."/>
            <person name="Di Palma S."/>
            <person name="Preisinger C."/>
            <person name="Peng M."/>
            <person name="Polat A.N."/>
            <person name="Heck A.J."/>
            <person name="Mohammed S."/>
        </authorList>
    </citation>
    <scope>PHOSPHORYLATION [LARGE SCALE ANALYSIS] AT SER-453 AND SER-660</scope>
    <scope>IDENTIFICATION BY MASS SPECTROMETRY [LARGE SCALE ANALYSIS]</scope>
    <source>
        <tissue>Cervix carcinoma</tissue>
        <tissue>Erythroleukemia</tissue>
    </source>
</reference>
<reference key="7">
    <citation type="journal article" date="2015" name="Genome Biol.">
        <title>KIAA0556 is a novel ciliary basal body component mutated in Joubert syndrome.</title>
        <authorList>
            <person name="Sanders A.A."/>
            <person name="de Vrieze E."/>
            <person name="Alazami A.M."/>
            <person name="Alzahrani F."/>
            <person name="Malarkey E.B."/>
            <person name="Sorusch N."/>
            <person name="Tebbe L."/>
            <person name="Kuhns S."/>
            <person name="van Dam T.J."/>
            <person name="Alhashem A."/>
            <person name="Tabarki B."/>
            <person name="Lu Q."/>
            <person name="Lambacher N.J."/>
            <person name="Kennedy J.E."/>
            <person name="Bowie R.V."/>
            <person name="Hetterschijt L."/>
            <person name="van Beersum S."/>
            <person name="van Reeuwijk J."/>
            <person name="Boldt K."/>
            <person name="Kremer H."/>
            <person name="Kesterson R.A."/>
            <person name="Monies D."/>
            <person name="Abouelhoda M."/>
            <person name="Roepman R."/>
            <person name="Huynen M.H."/>
            <person name="Ueffing M."/>
            <person name="Russell R.B."/>
            <person name="Wolfrum U."/>
            <person name="Yoder B.K."/>
            <person name="van Wijk E."/>
            <person name="Alkuraya F.S."/>
            <person name="Blacque O.E."/>
        </authorList>
    </citation>
    <scope>INVOLVEMENT IN JBTS26</scope>
    <scope>FUNCTION</scope>
    <scope>SUBCELLULAR LOCATION</scope>
    <scope>INTERACTION WITH IFT172; KATNA1; KATNAL1; KATNB1; KATNBL1 AND MICROTUBULES</scope>
</reference>
<reference key="8">
    <citation type="journal article" date="2019" name="Genet. Med.">
        <title>Autozygome and high throughput confirmation of disease genes candidacy.</title>
        <authorList>
            <person name="Maddirevula S."/>
            <person name="Alzahrani F."/>
            <person name="Al-Owain M."/>
            <person name="Al Muhaizea M.A."/>
            <person name="Kayyali H.R."/>
            <person name="AlHashem A."/>
            <person name="Rahbeeni Z."/>
            <person name="Al-Otaibi M."/>
            <person name="Alzaidan H.I."/>
            <person name="Balobaid A."/>
            <person name="El Khashab H.Y."/>
            <person name="Bubshait D.K."/>
            <person name="Faden M."/>
            <person name="Yamani S.A."/>
            <person name="Dabbagh O."/>
            <person name="Al-Mureikhi M."/>
            <person name="Jasser A.A."/>
            <person name="Alsaif H.S."/>
            <person name="Alluhaydan I."/>
            <person name="Seidahmed M.Z."/>
            <person name="Alabbasi B.H."/>
            <person name="Almogarri I."/>
            <person name="Kurdi W."/>
            <person name="Akleh H."/>
            <person name="Qari A."/>
            <person name="Al Tala S.M."/>
            <person name="Alhomaidi S."/>
            <person name="Kentab A.Y."/>
            <person name="Salih M.A."/>
            <person name="Chedrawi A."/>
            <person name="Alameer S."/>
            <person name="Tabarki B."/>
            <person name="Shamseldin H.E."/>
            <person name="Patel N."/>
            <person name="Ibrahim N."/>
            <person name="Abdulwahab F."/>
            <person name="Samira M."/>
            <person name="Goljan E."/>
            <person name="Abouelhoda M."/>
            <person name="Meyer B.F."/>
            <person name="Hashem M."/>
            <person name="Shaheen R."/>
            <person name="AlShahwan S."/>
            <person name="Alfadhel M."/>
            <person name="Ben-Omran T."/>
            <person name="Al-Qattan M.M."/>
            <person name="Monies D."/>
            <person name="Alkuraya F.S."/>
        </authorList>
    </citation>
    <scope>VARIANT JBTS26 558-ARG--CYS-1618 DEL</scope>
</reference>
<comment type="function">
    <text evidence="4">May influence the stability of microtubules (MT), possibly through interaction with the MT-severing katanin complex.</text>
</comment>
<comment type="subunit">
    <text evidence="4">Interacts with microtubules. Interacts with 4 subunits of the katanin complex: KATNA1, KATNAL1, KATNB1 and KATNBL1.</text>
</comment>
<comment type="subcellular location">
    <subcellularLocation>
        <location evidence="4">Cytoplasm</location>
        <location evidence="4">Cytoskeleton</location>
        <location evidence="4">Cilium axoneme</location>
    </subcellularLocation>
    <subcellularLocation>
        <location evidence="4">Cytoplasm</location>
        <location evidence="4">Cytoskeleton</location>
        <location evidence="4">Cilium basal body</location>
    </subcellularLocation>
    <subcellularLocation>
        <location evidence="4">Cytoplasm</location>
        <location evidence="4">Cytoskeleton</location>
    </subcellularLocation>
    <text evidence="4">When overexpressed, localizes to the cytoplasm where it associates with acetylated alpha-tubulin.</text>
</comment>
<comment type="disease" evidence="4 5">
    <disease id="DI-04615">
        <name>Joubert syndrome 26</name>
        <acronym>JBTS26</acronym>
        <description>A form of Joubert syndrome, a disorder presenting with cerebellar ataxia, oculomotor apraxia, hypotonia, neonatal breathing abnormalities and psychomotor delay. Neuroradiologically, it is characterized by cerebellar vermian hypoplasia/aplasia, thickened and reoriented superior cerebellar peduncles, and an abnormally large interpeduncular fossa, giving the appearance of a molar tooth on transaxial slices (molar tooth sign). Additional variable features include retinal dystrophy, renal disease, liver fibrosis, and polydactyly. JBTS26 inheritance is autosomal recessive.</description>
        <dbReference type="MIM" id="616784"/>
    </disease>
    <text>The disease is caused by variants affecting the gene represented in this entry.</text>
</comment>
<comment type="sequence caution" evidence="7">
    <conflict type="erroneous initiation">
        <sequence resource="EMBL-CDS" id="BAA25482"/>
    </conflict>
    <text>Extended N-terminus.</text>
</comment>
<keyword id="KW-0966">Cell projection</keyword>
<keyword id="KW-1186">Ciliopathy</keyword>
<keyword id="KW-0175">Coiled coil</keyword>
<keyword id="KW-0963">Cytoplasm</keyword>
<keyword id="KW-0206">Cytoskeleton</keyword>
<keyword id="KW-0979">Joubert syndrome</keyword>
<keyword id="KW-0597">Phosphoprotein</keyword>
<keyword id="KW-1267">Proteomics identification</keyword>
<keyword id="KW-1185">Reference proteome</keyword>
<dbReference type="EMBL" id="AB011128">
    <property type="protein sequence ID" value="BAA25482.2"/>
    <property type="status" value="ALT_INIT"/>
    <property type="molecule type" value="mRNA"/>
</dbReference>
<dbReference type="EMBL" id="AC002551">
    <property type="status" value="NOT_ANNOTATED_CDS"/>
    <property type="molecule type" value="Genomic_DNA"/>
</dbReference>
<dbReference type="EMBL" id="AC008732">
    <property type="status" value="NOT_ANNOTATED_CDS"/>
    <property type="molecule type" value="Genomic_DNA"/>
</dbReference>
<dbReference type="EMBL" id="AC016597">
    <property type="status" value="NOT_ANNOTATED_CDS"/>
    <property type="molecule type" value="Genomic_DNA"/>
</dbReference>
<dbReference type="EMBL" id="AC025275">
    <property type="status" value="NOT_ANNOTATED_CDS"/>
    <property type="molecule type" value="Genomic_DNA"/>
</dbReference>
<dbReference type="EMBL" id="AC092330">
    <property type="status" value="NOT_ANNOTATED_CDS"/>
    <property type="molecule type" value="Genomic_DNA"/>
</dbReference>
<dbReference type="EMBL" id="BC150276">
    <property type="protein sequence ID" value="AAI50277.1"/>
    <property type="molecule type" value="mRNA"/>
</dbReference>
<dbReference type="CCDS" id="CCDS32415.1"/>
<dbReference type="PIR" id="T00330">
    <property type="entry name" value="T00330"/>
</dbReference>
<dbReference type="RefSeq" id="NP_056017.4">
    <property type="nucleotide sequence ID" value="NM_015202.5"/>
</dbReference>
<dbReference type="BioGRID" id="116851">
    <property type="interactions" value="14"/>
</dbReference>
<dbReference type="FunCoup" id="O60303">
    <property type="interactions" value="468"/>
</dbReference>
<dbReference type="IntAct" id="O60303">
    <property type="interactions" value="129"/>
</dbReference>
<dbReference type="STRING" id="9606.ENSP00000261588"/>
<dbReference type="GlyGen" id="O60303">
    <property type="glycosylation" value="2 sites, 1 O-linked glycan (1 site)"/>
</dbReference>
<dbReference type="iPTMnet" id="O60303"/>
<dbReference type="PhosphoSitePlus" id="O60303"/>
<dbReference type="BioMuta" id="KIAA0556"/>
<dbReference type="jPOST" id="O60303"/>
<dbReference type="MassIVE" id="O60303"/>
<dbReference type="PaxDb" id="9606-ENSP00000261588"/>
<dbReference type="PeptideAtlas" id="O60303"/>
<dbReference type="ProteomicsDB" id="49331"/>
<dbReference type="Antibodypedia" id="26294">
    <property type="antibodies" value="26 antibodies from 9 providers"/>
</dbReference>
<dbReference type="DNASU" id="23247"/>
<dbReference type="Ensembl" id="ENST00000261588.10">
    <property type="protein sequence ID" value="ENSP00000261588.4"/>
    <property type="gene ID" value="ENSG00000047578.14"/>
</dbReference>
<dbReference type="GeneID" id="23247"/>
<dbReference type="KEGG" id="hsa:23247"/>
<dbReference type="MANE-Select" id="ENST00000261588.10">
    <property type="protein sequence ID" value="ENSP00000261588.4"/>
    <property type="RefSeq nucleotide sequence ID" value="NM_015202.5"/>
    <property type="RefSeq protein sequence ID" value="NP_056017.4"/>
</dbReference>
<dbReference type="UCSC" id="uc002dow.4">
    <property type="organism name" value="human"/>
</dbReference>
<dbReference type="AGR" id="HGNC:29068"/>
<dbReference type="CTD" id="23247"/>
<dbReference type="DisGeNET" id="23247"/>
<dbReference type="GeneCards" id="KATNIP"/>
<dbReference type="GeneReviews" id="KATNIP"/>
<dbReference type="HGNC" id="HGNC:29068">
    <property type="gene designation" value="KATNIP"/>
</dbReference>
<dbReference type="HPA" id="ENSG00000047578">
    <property type="expression patterns" value="Low tissue specificity"/>
</dbReference>
<dbReference type="MalaCards" id="KATNIP"/>
<dbReference type="MIM" id="616650">
    <property type="type" value="gene"/>
</dbReference>
<dbReference type="MIM" id="616784">
    <property type="type" value="phenotype"/>
</dbReference>
<dbReference type="neXtProt" id="NX_O60303"/>
<dbReference type="OpenTargets" id="ENSG00000047578"/>
<dbReference type="Orphanet" id="475">
    <property type="disease" value="Joubert syndrome"/>
</dbReference>
<dbReference type="PharmGKB" id="PA162392880"/>
<dbReference type="VEuPathDB" id="HostDB:ENSG00000047578"/>
<dbReference type="eggNOG" id="ENOG502QRY1">
    <property type="taxonomic scope" value="Eukaryota"/>
</dbReference>
<dbReference type="GeneTree" id="ENSGT00390000004566"/>
<dbReference type="HOGENOM" id="CLU_003418_0_1_1"/>
<dbReference type="InParanoid" id="O60303"/>
<dbReference type="OMA" id="IFCYDES"/>
<dbReference type="OrthoDB" id="304622at2759"/>
<dbReference type="PAN-GO" id="O60303">
    <property type="GO annotations" value="0 GO annotations based on evolutionary models"/>
</dbReference>
<dbReference type="PhylomeDB" id="O60303"/>
<dbReference type="TreeFam" id="TF314150"/>
<dbReference type="PathwayCommons" id="O60303"/>
<dbReference type="SignaLink" id="O60303"/>
<dbReference type="BioGRID-ORCS" id="23247">
    <property type="hits" value="12 hits in 1159 CRISPR screens"/>
</dbReference>
<dbReference type="ChiTaRS" id="KIAA0556">
    <property type="organism name" value="human"/>
</dbReference>
<dbReference type="GenomeRNAi" id="23247"/>
<dbReference type="Pharos" id="O60303">
    <property type="development level" value="Tdark"/>
</dbReference>
<dbReference type="PRO" id="PR:O60303"/>
<dbReference type="Proteomes" id="UP000005640">
    <property type="component" value="Chromosome 16"/>
</dbReference>
<dbReference type="RNAct" id="O60303">
    <property type="molecule type" value="protein"/>
</dbReference>
<dbReference type="Bgee" id="ENSG00000047578">
    <property type="expression patterns" value="Expressed in right uterine tube and 168 other cell types or tissues"/>
</dbReference>
<dbReference type="ExpressionAtlas" id="O60303">
    <property type="expression patterns" value="baseline and differential"/>
</dbReference>
<dbReference type="GO" id="GO:0034451">
    <property type="term" value="C:centriolar satellite"/>
    <property type="evidence" value="ECO:0000314"/>
    <property type="project" value="HPA"/>
</dbReference>
<dbReference type="GO" id="GO:0036064">
    <property type="term" value="C:ciliary basal body"/>
    <property type="evidence" value="ECO:0000314"/>
    <property type="project" value="HPA"/>
</dbReference>
<dbReference type="GO" id="GO:0005929">
    <property type="term" value="C:cilium"/>
    <property type="evidence" value="ECO:0000314"/>
    <property type="project" value="HPA"/>
</dbReference>
<dbReference type="GO" id="GO:0005737">
    <property type="term" value="C:cytoplasm"/>
    <property type="evidence" value="ECO:0007669"/>
    <property type="project" value="UniProtKB-KW"/>
</dbReference>
<dbReference type="GO" id="GO:0005615">
    <property type="term" value="C:extracellular space"/>
    <property type="evidence" value="ECO:0007005"/>
    <property type="project" value="UniProtKB"/>
</dbReference>
<dbReference type="GO" id="GO:0005654">
    <property type="term" value="C:nucleoplasm"/>
    <property type="evidence" value="ECO:0000314"/>
    <property type="project" value="HPA"/>
</dbReference>
<dbReference type="GO" id="GO:0005886">
    <property type="term" value="C:plasma membrane"/>
    <property type="evidence" value="ECO:0000314"/>
    <property type="project" value="HPA"/>
</dbReference>
<dbReference type="GO" id="GO:0090660">
    <property type="term" value="P:cerebrospinal fluid circulation"/>
    <property type="evidence" value="ECO:0007669"/>
    <property type="project" value="Ensembl"/>
</dbReference>
<dbReference type="InterPro" id="IPR026704">
    <property type="entry name" value="KATNIP"/>
</dbReference>
<dbReference type="InterPro" id="IPR027859">
    <property type="entry name" value="KATNIP_dom"/>
</dbReference>
<dbReference type="PANTHER" id="PTHR21534">
    <property type="entry name" value="KATANIN-INTERACTING PROTEIN"/>
    <property type="match status" value="1"/>
</dbReference>
<dbReference type="PANTHER" id="PTHR21534:SF0">
    <property type="entry name" value="KATANIN-INTERACTING PROTEIN"/>
    <property type="match status" value="1"/>
</dbReference>
<dbReference type="Pfam" id="PF14652">
    <property type="entry name" value="DUF4457"/>
    <property type="match status" value="2"/>
</dbReference>
<name>KATIP_HUMAN</name>